<dbReference type="EMBL" id="AP003868">
    <property type="protein sequence ID" value="BAC99340.1"/>
    <property type="molecule type" value="Genomic_DNA"/>
</dbReference>
<dbReference type="EMBL" id="AP003881">
    <property type="protein sequence ID" value="BAD01178.1"/>
    <property type="molecule type" value="Genomic_DNA"/>
</dbReference>
<dbReference type="EMBL" id="AP008214">
    <property type="protein sequence ID" value="BAF23775.1"/>
    <property type="molecule type" value="Genomic_DNA"/>
</dbReference>
<dbReference type="EMBL" id="AP014964">
    <property type="status" value="NOT_ANNOTATED_CDS"/>
    <property type="molecule type" value="Genomic_DNA"/>
</dbReference>
<dbReference type="EMBL" id="CM000145">
    <property type="protein sequence ID" value="EAZ42825.1"/>
    <property type="molecule type" value="Genomic_DNA"/>
</dbReference>
<dbReference type="RefSeq" id="XP_015650011.1">
    <property type="nucleotide sequence ID" value="XM_015794525.1"/>
</dbReference>
<dbReference type="RefSeq" id="XP_015650012.1">
    <property type="nucleotide sequence ID" value="XM_015794526.1"/>
</dbReference>
<dbReference type="SMR" id="Q6ZKB2"/>
<dbReference type="FunCoup" id="Q6ZKB2">
    <property type="interactions" value="64"/>
</dbReference>
<dbReference type="STRING" id="39947.Q6ZKB2"/>
<dbReference type="PaxDb" id="39947-Q6ZKB2"/>
<dbReference type="KEGG" id="dosa:Os08g0431200"/>
<dbReference type="eggNOG" id="KOG1922">
    <property type="taxonomic scope" value="Eukaryota"/>
</dbReference>
<dbReference type="HOGENOM" id="CLU_524404_0_0_1"/>
<dbReference type="InParanoid" id="Q6ZKB2"/>
<dbReference type="OrthoDB" id="1668162at2759"/>
<dbReference type="Proteomes" id="UP000000763">
    <property type="component" value="Chromosome 8"/>
</dbReference>
<dbReference type="Proteomes" id="UP000007752">
    <property type="component" value="Chromosome 8"/>
</dbReference>
<dbReference type="Proteomes" id="UP000059680">
    <property type="component" value="Chromosome 8"/>
</dbReference>
<dbReference type="GO" id="GO:0005856">
    <property type="term" value="C:cytoskeleton"/>
    <property type="evidence" value="ECO:0000318"/>
    <property type="project" value="GO_Central"/>
</dbReference>
<dbReference type="GO" id="GO:0016020">
    <property type="term" value="C:membrane"/>
    <property type="evidence" value="ECO:0007669"/>
    <property type="project" value="UniProtKB-SubCell"/>
</dbReference>
<dbReference type="GO" id="GO:0051015">
    <property type="term" value="F:actin filament binding"/>
    <property type="evidence" value="ECO:0000318"/>
    <property type="project" value="GO_Central"/>
</dbReference>
<dbReference type="GO" id="GO:0030036">
    <property type="term" value="P:actin cytoskeleton organization"/>
    <property type="evidence" value="ECO:0000318"/>
    <property type="project" value="GO_Central"/>
</dbReference>
<dbReference type="GO" id="GO:0045010">
    <property type="term" value="P:actin nucleation"/>
    <property type="evidence" value="ECO:0007669"/>
    <property type="project" value="InterPro"/>
</dbReference>
<dbReference type="Gene3D" id="1.20.58.2220">
    <property type="entry name" value="Formin, FH2 domain"/>
    <property type="match status" value="1"/>
</dbReference>
<dbReference type="InterPro" id="IPR015425">
    <property type="entry name" value="FH2_Formin"/>
</dbReference>
<dbReference type="InterPro" id="IPR042201">
    <property type="entry name" value="FH2_Formin_sf"/>
</dbReference>
<dbReference type="InterPro" id="IPR027643">
    <property type="entry name" value="Formin-like_plant"/>
</dbReference>
<dbReference type="PANTHER" id="PTHR23213:SF177">
    <property type="entry name" value="FORMIN-LIKE PROTEIN 11"/>
    <property type="match status" value="1"/>
</dbReference>
<dbReference type="PANTHER" id="PTHR23213">
    <property type="entry name" value="FORMIN-RELATED"/>
    <property type="match status" value="1"/>
</dbReference>
<dbReference type="Pfam" id="PF02181">
    <property type="entry name" value="FH2"/>
    <property type="match status" value="1"/>
</dbReference>
<dbReference type="SMART" id="SM00498">
    <property type="entry name" value="FH2"/>
    <property type="match status" value="1"/>
</dbReference>
<dbReference type="SUPFAM" id="SSF101447">
    <property type="entry name" value="Formin homology 2 domain (FH2 domain)"/>
    <property type="match status" value="1"/>
</dbReference>
<dbReference type="PROSITE" id="PS51444">
    <property type="entry name" value="FH2"/>
    <property type="match status" value="1"/>
</dbReference>
<accession>Q6ZKB2</accession>
<keyword id="KW-0472">Membrane</keyword>
<keyword id="KW-1185">Reference proteome</keyword>
<keyword id="KW-0732">Signal</keyword>
<keyword id="KW-0812">Transmembrane</keyword>
<keyword id="KW-1133">Transmembrane helix</keyword>
<evidence type="ECO:0000255" key="1"/>
<evidence type="ECO:0000255" key="2">
    <source>
        <dbReference type="PROSITE-ProRule" id="PRU00774"/>
    </source>
</evidence>
<evidence type="ECO:0000256" key="3">
    <source>
        <dbReference type="SAM" id="MobiDB-lite"/>
    </source>
</evidence>
<evidence type="ECO:0000305" key="4"/>
<protein>
    <recommendedName>
        <fullName>Formin-like protein 9</fullName>
    </recommendedName>
    <alternativeName>
        <fullName>OsFH9</fullName>
    </alternativeName>
</protein>
<gene>
    <name type="primary">FH9</name>
    <name type="ordered locus">Os08g0431200</name>
    <name type="ordered locus">LOC_Os08g33430</name>
    <name type="ORF">OJ1111_B08.10</name>
    <name type="ORF">OJ1124_B05.19</name>
    <name type="ORF">OsJ_026308</name>
</gene>
<comment type="subcellular location">
    <subcellularLocation>
        <location evidence="4">Membrane</location>
        <topology evidence="4">Single-pass membrane protein</topology>
    </subcellularLocation>
</comment>
<comment type="similarity">
    <text evidence="4">Belongs to the formin-like family. Class-I subfamily.</text>
</comment>
<organism>
    <name type="scientific">Oryza sativa subsp. japonica</name>
    <name type="common">Rice</name>
    <dbReference type="NCBI Taxonomy" id="39947"/>
    <lineage>
        <taxon>Eukaryota</taxon>
        <taxon>Viridiplantae</taxon>
        <taxon>Streptophyta</taxon>
        <taxon>Embryophyta</taxon>
        <taxon>Tracheophyta</taxon>
        <taxon>Spermatophyta</taxon>
        <taxon>Magnoliopsida</taxon>
        <taxon>Liliopsida</taxon>
        <taxon>Poales</taxon>
        <taxon>Poaceae</taxon>
        <taxon>BOP clade</taxon>
        <taxon>Oryzoideae</taxon>
        <taxon>Oryzeae</taxon>
        <taxon>Oryzinae</taxon>
        <taxon>Oryza</taxon>
        <taxon>Oryza sativa</taxon>
    </lineage>
</organism>
<reference key="1">
    <citation type="journal article" date="2005" name="Nature">
        <title>The map-based sequence of the rice genome.</title>
        <authorList>
            <consortium name="International rice genome sequencing project (IRGSP)"/>
        </authorList>
    </citation>
    <scope>NUCLEOTIDE SEQUENCE [LARGE SCALE GENOMIC DNA]</scope>
    <source>
        <strain>cv. Nipponbare</strain>
    </source>
</reference>
<reference key="2">
    <citation type="journal article" date="2008" name="Nucleic Acids Res.">
        <title>The rice annotation project database (RAP-DB): 2008 update.</title>
        <authorList>
            <consortium name="The rice annotation project (RAP)"/>
        </authorList>
    </citation>
    <scope>GENOME REANNOTATION</scope>
    <source>
        <strain>cv. Nipponbare</strain>
    </source>
</reference>
<reference key="3">
    <citation type="journal article" date="2013" name="Rice">
        <title>Improvement of the Oryza sativa Nipponbare reference genome using next generation sequence and optical map data.</title>
        <authorList>
            <person name="Kawahara Y."/>
            <person name="de la Bastide M."/>
            <person name="Hamilton J.P."/>
            <person name="Kanamori H."/>
            <person name="McCombie W.R."/>
            <person name="Ouyang S."/>
            <person name="Schwartz D.C."/>
            <person name="Tanaka T."/>
            <person name="Wu J."/>
            <person name="Zhou S."/>
            <person name="Childs K.L."/>
            <person name="Davidson R.M."/>
            <person name="Lin H."/>
            <person name="Quesada-Ocampo L."/>
            <person name="Vaillancourt B."/>
            <person name="Sakai H."/>
            <person name="Lee S.S."/>
            <person name="Kim J."/>
            <person name="Numa H."/>
            <person name="Itoh T."/>
            <person name="Buell C.R."/>
            <person name="Matsumoto T."/>
        </authorList>
    </citation>
    <scope>GENOME REANNOTATION</scope>
    <source>
        <strain>cv. Nipponbare</strain>
    </source>
</reference>
<reference key="4">
    <citation type="journal article" date="2005" name="PLoS Biol.">
        <title>The genomes of Oryza sativa: a history of duplications.</title>
        <authorList>
            <person name="Yu J."/>
            <person name="Wang J."/>
            <person name="Lin W."/>
            <person name="Li S."/>
            <person name="Li H."/>
            <person name="Zhou J."/>
            <person name="Ni P."/>
            <person name="Dong W."/>
            <person name="Hu S."/>
            <person name="Zeng C."/>
            <person name="Zhang J."/>
            <person name="Zhang Y."/>
            <person name="Li R."/>
            <person name="Xu Z."/>
            <person name="Li S."/>
            <person name="Li X."/>
            <person name="Zheng H."/>
            <person name="Cong L."/>
            <person name="Lin L."/>
            <person name="Yin J."/>
            <person name="Geng J."/>
            <person name="Li G."/>
            <person name="Shi J."/>
            <person name="Liu J."/>
            <person name="Lv H."/>
            <person name="Li J."/>
            <person name="Wang J."/>
            <person name="Deng Y."/>
            <person name="Ran L."/>
            <person name="Shi X."/>
            <person name="Wang X."/>
            <person name="Wu Q."/>
            <person name="Li C."/>
            <person name="Ren X."/>
            <person name="Wang J."/>
            <person name="Wang X."/>
            <person name="Li D."/>
            <person name="Liu D."/>
            <person name="Zhang X."/>
            <person name="Ji Z."/>
            <person name="Zhao W."/>
            <person name="Sun Y."/>
            <person name="Zhang Z."/>
            <person name="Bao J."/>
            <person name="Han Y."/>
            <person name="Dong L."/>
            <person name="Ji J."/>
            <person name="Chen P."/>
            <person name="Wu S."/>
            <person name="Liu J."/>
            <person name="Xiao Y."/>
            <person name="Bu D."/>
            <person name="Tan J."/>
            <person name="Yang L."/>
            <person name="Ye C."/>
            <person name="Zhang J."/>
            <person name="Xu J."/>
            <person name="Zhou Y."/>
            <person name="Yu Y."/>
            <person name="Zhang B."/>
            <person name="Zhuang S."/>
            <person name="Wei H."/>
            <person name="Liu B."/>
            <person name="Lei M."/>
            <person name="Yu H."/>
            <person name="Li Y."/>
            <person name="Xu H."/>
            <person name="Wei S."/>
            <person name="He X."/>
            <person name="Fang L."/>
            <person name="Zhang Z."/>
            <person name="Zhang Y."/>
            <person name="Huang X."/>
            <person name="Su Z."/>
            <person name="Tong W."/>
            <person name="Li J."/>
            <person name="Tong Z."/>
            <person name="Li S."/>
            <person name="Ye J."/>
            <person name="Wang L."/>
            <person name="Fang L."/>
            <person name="Lei T."/>
            <person name="Chen C.-S."/>
            <person name="Chen H.-C."/>
            <person name="Xu Z."/>
            <person name="Li H."/>
            <person name="Huang H."/>
            <person name="Zhang F."/>
            <person name="Xu H."/>
            <person name="Li N."/>
            <person name="Zhao C."/>
            <person name="Li S."/>
            <person name="Dong L."/>
            <person name="Huang Y."/>
            <person name="Li L."/>
            <person name="Xi Y."/>
            <person name="Qi Q."/>
            <person name="Li W."/>
            <person name="Zhang B."/>
            <person name="Hu W."/>
            <person name="Zhang Y."/>
            <person name="Tian X."/>
            <person name="Jiao Y."/>
            <person name="Liang X."/>
            <person name="Jin J."/>
            <person name="Gao L."/>
            <person name="Zheng W."/>
            <person name="Hao B."/>
            <person name="Liu S.-M."/>
            <person name="Wang W."/>
            <person name="Yuan L."/>
            <person name="Cao M."/>
            <person name="McDermott J."/>
            <person name="Samudrala R."/>
            <person name="Wang J."/>
            <person name="Wong G.K.-S."/>
            <person name="Yang H."/>
        </authorList>
    </citation>
    <scope>NUCLEOTIDE SEQUENCE [LARGE SCALE GENOMIC DNA]</scope>
    <source>
        <strain>cv. Nipponbare</strain>
    </source>
</reference>
<reference key="5">
    <citation type="journal article" date="2004" name="BMC Genomics">
        <title>Formin homology 2 domains occur in multiple contexts in angiosperms.</title>
        <authorList>
            <person name="Cvrckova F."/>
            <person name="Novotny M."/>
            <person name="Pickova D."/>
            <person name="Zarsky V."/>
        </authorList>
    </citation>
    <scope>GENE FAMILY</scope>
    <scope>NOMENCLATURE</scope>
</reference>
<sequence>MGMAMRCVLVLFSVSPVLLLFNFEMLEVALHLASREKELDTAAVTPSASLSFLSRFRIMLGMNHHRSRGRRHKRYSEAPAPAPAPVPAHQARSEAPAPLVHVPRKGMPSTHRSHIAPARSPVHKVKDGGHTKIPRSAIVALGVVGLCLVVLGVVIAAFSVRRSRKFKKVCTKAFKPFRHGSRDQRSPAATRKVSSHPSPDPLTLSSIVQYQQNLPNLKQSSESKSLSIQSTIPMGTELIVSDHAVINNSQSDEVESFHSIPCSDLSAGSITELPQQICDRRAIMNRSEYFLQTHDSPSDSSYQSLSPDCTSRLSPKDQTFTASSHLSLRSKTCPEKSDGENAEINCHDGLEITCISGSMEHQEAPIEERARINFRNPPSQHIFPPSYRTDTSQSKINIAFTMTNSKVESSSKESSRIETSSSMGIPKPAPPPPPQKNPPPNLKGQCYGQPPPPPPLPLQIQVGKDGSPLPRLKPLHWDKVRAAPNRSMVWNDIRSSSFEFEFDEQMIKSLFAYNLQGSMKDEEAMNKTASTTKHVIEHHRLQNTTILLKTLNANTSQVCNSVIQGNGLSVQQLEALVKMKPTKEEEEKLLNYDGDINMLDPAENFVKVLLTIPMAFPRMEVMLYKENFDDEVAHIKMSFAMIEGACTELKSSKLFLRLLEAVLKTGNRMNVGTLRGGASAFKLDALLKLADIRGTDGKTTLLHFVVKEMARSKGLKALEKLNETPSSCHDTPTEREEYSSMGTEFVSELSNELGNVKKVASIDLDTLRNSISNLSCGLAQLRNLVEKDLASDDKNNNFLQCMKSFLNHAENTMQGLKADEAQVLLNVRELTEYYHGEVSKDESNLLQIFIIVKDFLGLLDKVCREMRGTKHNQTLNLVLPLK</sequence>
<name>FH9_ORYSJ</name>
<feature type="signal peptide" evidence="1">
    <location>
        <begin position="1"/>
        <end position="19"/>
    </location>
</feature>
<feature type="chain" id="PRO_0000319000" description="Formin-like protein 9">
    <location>
        <begin position="20"/>
        <end position="882"/>
    </location>
</feature>
<feature type="transmembrane region" description="Helical" evidence="1">
    <location>
        <begin position="138"/>
        <end position="158"/>
    </location>
</feature>
<feature type="domain" description="FH2" evidence="2">
    <location>
        <begin position="462"/>
        <end position="882"/>
    </location>
</feature>
<feature type="region of interest" description="Disordered" evidence="3">
    <location>
        <begin position="67"/>
        <end position="92"/>
    </location>
</feature>
<feature type="region of interest" description="Disordered" evidence="3">
    <location>
        <begin position="178"/>
        <end position="202"/>
    </location>
</feature>
<feature type="region of interest" description="Disordered" evidence="3">
    <location>
        <begin position="293"/>
        <end position="316"/>
    </location>
</feature>
<feature type="region of interest" description="Disordered" evidence="3">
    <location>
        <begin position="401"/>
        <end position="471"/>
    </location>
</feature>
<feature type="compositionally biased region" description="Low complexity" evidence="3">
    <location>
        <begin position="298"/>
        <end position="308"/>
    </location>
</feature>
<feature type="compositionally biased region" description="Pro residues" evidence="3">
    <location>
        <begin position="427"/>
        <end position="441"/>
    </location>
</feature>
<proteinExistence type="inferred from homology"/>